<comment type="function">
    <text evidence="6 8 9 10 11 12 14">E3 ubiquitin-protein ligase that mediates ubiquitination of TFRC, CD86, FAS and MHC class II proteins, such as HLA-DR alpha and beta, and promotes their subsequent endocytosis and sorting to lysosomes via multivesicular bodies (PubMed:18389477, PubMed:18305173, PubMed:21220452, PubMed:35045264). By constitutively ubiquitinating MHC class II proteins in immature dendritic cells, down-regulates their cell surface localization thus sequestering them in the intracellular endosomal system. Also regulates insulin sensitivity by controlling surface expression of the insulin receptor subunit beta/INSR by direct ubiquitination and degradation (PubMed:27577745).</text>
</comment>
<comment type="function">
    <text evidence="14">(Microbial infection) Plays a role in iron metabolism by regulating the levels of the transferrin receptor TFRC during human cytomegalovirus infection, subsequently contributing to a proviral effect.</text>
</comment>
<comment type="catalytic activity">
    <reaction>
        <text>S-ubiquitinyl-[E2 ubiquitin-conjugating enzyme]-L-cysteine + [acceptor protein]-L-lysine = [E2 ubiquitin-conjugating enzyme]-L-cysteine + N(6)-ubiquitinyl-[acceptor protein]-L-lysine.</text>
        <dbReference type="EC" id="2.3.2.27"/>
    </reaction>
</comment>
<comment type="pathway">
    <text>Protein modification; protein ubiquitination.</text>
</comment>
<comment type="subunit">
    <text evidence="11">Interacts with CD83; this interaction antagonizes MARCHF1-mediated MHC II and CD86 down-regulation.</text>
</comment>
<comment type="subcellular location">
    <subcellularLocation>
        <location evidence="2">Golgi apparatus</location>
        <location evidence="2">trans-Golgi network membrane</location>
        <topology evidence="3">Multi-pass membrane protein</topology>
    </subcellularLocation>
    <subcellularLocation>
        <location evidence="6">Lysosome membrane</location>
        <topology evidence="3">Multi-pass membrane protein</topology>
    </subcellularLocation>
    <subcellularLocation>
        <location evidence="16">Cytoplasmic vesicle membrane</location>
        <topology evidence="3">Multi-pass membrane protein</topology>
    </subcellularLocation>
    <subcellularLocation>
        <location evidence="10">Late endosome membrane</location>
        <topology evidence="3">Multi-pass membrane protein</topology>
    </subcellularLocation>
    <subcellularLocation>
        <location evidence="6 10">Early endosome membrane</location>
        <topology evidence="3">Multi-pass membrane protein</topology>
    </subcellularLocation>
    <subcellularLocation>
        <location evidence="10">Cell membrane</location>
        <topology evidence="3">Multi-pass membrane protein</topology>
    </subcellularLocation>
</comment>
<comment type="alternative products">
    <event type="alternative splicing"/>
    <isoform>
        <id>Q8TCQ1-1</id>
        <name>1</name>
        <sequence type="displayed"/>
    </isoform>
    <isoform>
        <id>Q8TCQ1-2</id>
        <name>2</name>
        <sequence type="described" ref="VSP_022724 VSP_022725"/>
    </isoform>
</comment>
<comment type="tissue specificity">
    <text evidence="6 7">Expressed in antigen presenting cells, APCs, located in lymph nodes and spleen. Also expressed in lung. Expression is high in follicular B-cells, moderate in dendritic cells and low in splenic T-cells.</text>
</comment>
<comment type="developmental stage">
    <text>During maturation of dendritic cells, expression is down-regulated and stabilizes MHC class II proteins accumulate at the plasma membrane.</text>
</comment>
<comment type="induction">
    <text evidence="9 12 14">By IL10/interleukin-10 (PubMed:18389477). By human cytomegalovirus infection (PubMed:35045264). Transcription is repressed by insulin through FOXO1 (PubMed:27577745).</text>
</comment>
<comment type="domain">
    <text evidence="4">The RING-CH-type zinc finger domain is required for E3 ligase activity.</text>
</comment>
<comment type="PTM">
    <text evidence="13">Ubiquitinated via ubiquitin-conjugating enzyme E2 D1/UBE2D1 independently of lysines, leading to proteolytic degradation.</text>
</comment>
<comment type="PTM">
    <text evidence="1">Has a short half-life. Instability/short half-life permits rapid changes that allow efficient induction of antigen presentation once antigen presenting cells, APCs, receive maturation signals. Small changes in protein levels significantly alter the cell surface display of MHC class II proteins (By similarity).</text>
</comment>
<accession>Q8TCQ1</accession>
<accession>D3DP29</accession>
<accession>Q9NWR0</accession>
<name>MARH1_HUMAN</name>
<organism>
    <name type="scientific">Homo sapiens</name>
    <name type="common">Human</name>
    <dbReference type="NCBI Taxonomy" id="9606"/>
    <lineage>
        <taxon>Eukaryota</taxon>
        <taxon>Metazoa</taxon>
        <taxon>Chordata</taxon>
        <taxon>Craniata</taxon>
        <taxon>Vertebrata</taxon>
        <taxon>Euteleostomi</taxon>
        <taxon>Mammalia</taxon>
        <taxon>Eutheria</taxon>
        <taxon>Euarchontoglires</taxon>
        <taxon>Primates</taxon>
        <taxon>Haplorrhini</taxon>
        <taxon>Catarrhini</taxon>
        <taxon>Hominidae</taxon>
        <taxon>Homo</taxon>
    </lineage>
</organism>
<gene>
    <name evidence="17" type="primary">MARCHF1</name>
    <name type="synonym">MARCH1</name>
    <name type="synonym">RNF171</name>
</gene>
<feature type="chain" id="PRO_0000274365" description="E3 ubiquitin-protein ligase MARCHF1">
    <location>
        <begin position="1"/>
        <end position="289"/>
    </location>
</feature>
<feature type="transmembrane region" description="Helical" evidence="3">
    <location>
        <begin position="155"/>
        <end position="175"/>
    </location>
</feature>
<feature type="transmembrane region" description="Helical" evidence="3">
    <location>
        <begin position="197"/>
        <end position="217"/>
    </location>
</feature>
<feature type="zinc finger region" description="RING-CH-type" evidence="4">
    <location>
        <begin position="72"/>
        <end position="133"/>
    </location>
</feature>
<feature type="region of interest" description="Responsible for low stability" evidence="1">
    <location>
        <begin position="1"/>
        <end position="66"/>
    </location>
</feature>
<feature type="region of interest" description="Disordered" evidence="5">
    <location>
        <begin position="13"/>
        <end position="69"/>
    </location>
</feature>
<feature type="region of interest" description="Responsible for down-regulation of CD86 and MHC class II cell surface expression" evidence="1">
    <location>
        <begin position="222"/>
        <end position="279"/>
    </location>
</feature>
<feature type="compositionally biased region" description="Low complexity" evidence="5">
    <location>
        <begin position="43"/>
        <end position="58"/>
    </location>
</feature>
<feature type="compositionally biased region" description="Polar residues" evidence="5">
    <location>
        <begin position="59"/>
        <end position="69"/>
    </location>
</feature>
<feature type="binding site" evidence="4">
    <location>
        <position position="80"/>
    </location>
    <ligand>
        <name>Zn(2+)</name>
        <dbReference type="ChEBI" id="CHEBI:29105"/>
        <label>1</label>
    </ligand>
</feature>
<feature type="binding site" evidence="4">
    <location>
        <position position="83"/>
    </location>
    <ligand>
        <name>Zn(2+)</name>
        <dbReference type="ChEBI" id="CHEBI:29105"/>
        <label>1</label>
    </ligand>
</feature>
<feature type="binding site" evidence="4">
    <location>
        <position position="97"/>
    </location>
    <ligand>
        <name>Zn(2+)</name>
        <dbReference type="ChEBI" id="CHEBI:29105"/>
        <label>2</label>
    </ligand>
</feature>
<feature type="binding site" evidence="4">
    <location>
        <position position="99"/>
    </location>
    <ligand>
        <name>Zn(2+)</name>
        <dbReference type="ChEBI" id="CHEBI:29105"/>
        <label>2</label>
    </ligand>
</feature>
<feature type="binding site" evidence="4">
    <location>
        <position position="107"/>
    </location>
    <ligand>
        <name>Zn(2+)</name>
        <dbReference type="ChEBI" id="CHEBI:29105"/>
        <label>1</label>
    </ligand>
</feature>
<feature type="binding site" evidence="4">
    <location>
        <position position="110"/>
    </location>
    <ligand>
        <name>Zn(2+)</name>
        <dbReference type="ChEBI" id="CHEBI:29105"/>
        <label>1</label>
    </ligand>
</feature>
<feature type="binding site" evidence="4">
    <location>
        <position position="123"/>
    </location>
    <ligand>
        <name>Zn(2+)</name>
        <dbReference type="ChEBI" id="CHEBI:29105"/>
        <label>2</label>
    </ligand>
</feature>
<feature type="binding site" evidence="4">
    <location>
        <position position="126"/>
    </location>
    <ligand>
        <name>Zn(2+)</name>
        <dbReference type="ChEBI" id="CHEBI:29105"/>
        <label>2</label>
    </ligand>
</feature>
<feature type="splice variant" id="VSP_022724" description="In isoform 2." evidence="15">
    <location>
        <begin position="1"/>
        <end position="18"/>
    </location>
</feature>
<feature type="splice variant" id="VSP_022725" description="In isoform 2." evidence="15">
    <original>TRTPEISGDLADASQTSTLNEKSPGRSASRSSNISK</original>
    <variation>MTSSHVCCNFLNMWKKSKISTMYYLNQDAKLSNLFLQ</variation>
    <location>
        <begin position="19"/>
        <end position="54"/>
    </location>
</feature>
<evidence type="ECO:0000250" key="1"/>
<evidence type="ECO:0000250" key="2">
    <source>
        <dbReference type="UniProtKB" id="Q6NZQ8"/>
    </source>
</evidence>
<evidence type="ECO:0000255" key="3"/>
<evidence type="ECO:0000255" key="4">
    <source>
        <dbReference type="PROSITE-ProRule" id="PRU00623"/>
    </source>
</evidence>
<evidence type="ECO:0000256" key="5">
    <source>
        <dbReference type="SAM" id="MobiDB-lite"/>
    </source>
</evidence>
<evidence type="ECO:0000269" key="6">
    <source>
    </source>
</evidence>
<evidence type="ECO:0000269" key="7">
    <source>
    </source>
</evidence>
<evidence type="ECO:0000269" key="8">
    <source>
    </source>
</evidence>
<evidence type="ECO:0000269" key="9">
    <source>
    </source>
</evidence>
<evidence type="ECO:0000269" key="10">
    <source>
    </source>
</evidence>
<evidence type="ECO:0000269" key="11">
    <source>
    </source>
</evidence>
<evidence type="ECO:0000269" key="12">
    <source>
    </source>
</evidence>
<evidence type="ECO:0000269" key="13">
    <source>
    </source>
</evidence>
<evidence type="ECO:0000269" key="14">
    <source>
    </source>
</evidence>
<evidence type="ECO:0000303" key="15">
    <source>
    </source>
</evidence>
<evidence type="ECO:0000305" key="16"/>
<evidence type="ECO:0000312" key="17">
    <source>
        <dbReference type="HGNC" id="HGNC:26077"/>
    </source>
</evidence>
<sequence length="289" mass="32308">MLGWCEAIARNPHRIPNNTRTPEISGDLADASQTSTLNEKSPGRSASRSSNISKASSPTTGTAPRSQSRLSVCPSTQDICRICHCEGDEESPLITPCRCTGTLRFVHQSCLHQWIKSSDTRCCELCKYDFIMETKLKPLRKWEKLQMTTSERRKIFCSVTFHVIAITCVVWSLYVLIDRTAEEIKQGNDNGVLEWPFWTKLVVVAIGFTGGLVFMYVQCKVYVQLWRRLKAYNRVIFVQNCPDTAKKLEKNFSCNVNTDIKDAVVVPVPQTGANSLPSAEGGPPEVVSV</sequence>
<proteinExistence type="evidence at protein level"/>
<protein>
    <recommendedName>
        <fullName>E3 ubiquitin-protein ligase MARCHF1</fullName>
        <ecNumber>2.3.2.27</ecNumber>
    </recommendedName>
    <alternativeName>
        <fullName>Membrane-associated RING finger protein 1</fullName>
    </alternativeName>
    <alternativeName>
        <fullName>Membrane-associated RING-CH protein I</fullName>
        <shortName>MARCH-I</shortName>
    </alternativeName>
    <alternativeName>
        <fullName>RING finger protein 171</fullName>
    </alternativeName>
    <alternativeName>
        <fullName evidence="16">RING-type E3 ubiquitin transferase MARCHF1</fullName>
    </alternativeName>
</protein>
<dbReference type="EC" id="2.3.2.27"/>
<dbReference type="EMBL" id="AK000675">
    <property type="protein sequence ID" value="BAA91319.1"/>
    <property type="molecule type" value="mRNA"/>
</dbReference>
<dbReference type="EMBL" id="AL713759">
    <property type="protein sequence ID" value="CAD28529.1"/>
    <property type="molecule type" value="mRNA"/>
</dbReference>
<dbReference type="EMBL" id="CH471056">
    <property type="protein sequence ID" value="EAX04835.1"/>
    <property type="molecule type" value="Genomic_DNA"/>
</dbReference>
<dbReference type="CCDS" id="CCDS3806.1">
    <molecule id="Q8TCQ1-2"/>
</dbReference>
<dbReference type="CCDS" id="CCDS54814.1">
    <molecule id="Q8TCQ1-1"/>
</dbReference>
<dbReference type="RefSeq" id="NP_001159845.1">
    <molecule id="Q8TCQ1-1"/>
    <property type="nucleotide sequence ID" value="NM_001166373.2"/>
</dbReference>
<dbReference type="RefSeq" id="NP_060393.1">
    <molecule id="Q8TCQ1-2"/>
    <property type="nucleotide sequence ID" value="NM_017923.4"/>
</dbReference>
<dbReference type="RefSeq" id="XP_016863823.1">
    <molecule id="Q8TCQ1-1"/>
    <property type="nucleotide sequence ID" value="XM_017008334.2"/>
</dbReference>
<dbReference type="SMR" id="Q8TCQ1"/>
<dbReference type="BioGRID" id="120348">
    <property type="interactions" value="88"/>
</dbReference>
<dbReference type="FunCoup" id="Q8TCQ1">
    <property type="interactions" value="219"/>
</dbReference>
<dbReference type="IntAct" id="Q8TCQ1">
    <property type="interactions" value="46"/>
</dbReference>
<dbReference type="STRING" id="9606.ENSP00000427223"/>
<dbReference type="TCDB" id="8.A.159.1.1">
    <property type="family name" value="the march ubiquitin ligase (march) family"/>
</dbReference>
<dbReference type="GlyCosmos" id="Q8TCQ1">
    <property type="glycosylation" value="2 sites, 1 glycan"/>
</dbReference>
<dbReference type="GlyGen" id="Q8TCQ1">
    <property type="glycosylation" value="2 sites, 1 O-linked glycan (2 sites)"/>
</dbReference>
<dbReference type="iPTMnet" id="Q8TCQ1"/>
<dbReference type="PhosphoSitePlus" id="Q8TCQ1"/>
<dbReference type="SwissPalm" id="Q8TCQ1"/>
<dbReference type="BioMuta" id="MARCH1"/>
<dbReference type="DMDM" id="74762613"/>
<dbReference type="jPOST" id="Q8TCQ1"/>
<dbReference type="MassIVE" id="Q8TCQ1"/>
<dbReference type="PaxDb" id="9606-ENSP00000427223"/>
<dbReference type="PeptideAtlas" id="Q8TCQ1"/>
<dbReference type="ProteomicsDB" id="74150">
    <molecule id="Q8TCQ1-1"/>
</dbReference>
<dbReference type="ProteomicsDB" id="74151">
    <molecule id="Q8TCQ1-2"/>
</dbReference>
<dbReference type="Antibodypedia" id="3022">
    <property type="antibodies" value="157 antibodies from 25 providers"/>
</dbReference>
<dbReference type="DNASU" id="55016"/>
<dbReference type="Ensembl" id="ENST00000274056.11">
    <molecule id="Q8TCQ1-1"/>
    <property type="protein sequence ID" value="ENSP00000274056.7"/>
    <property type="gene ID" value="ENSG00000145416.14"/>
</dbReference>
<dbReference type="Ensembl" id="ENST00000339875.9">
    <molecule id="Q8TCQ1-2"/>
    <property type="protein sequence ID" value="ENSP00000345676.5"/>
    <property type="gene ID" value="ENSG00000145416.14"/>
</dbReference>
<dbReference type="Ensembl" id="ENST00000503008.5">
    <molecule id="Q8TCQ1-1"/>
    <property type="protein sequence ID" value="ENSP00000427223.1"/>
    <property type="gene ID" value="ENSG00000145416.14"/>
</dbReference>
<dbReference type="GeneID" id="55016"/>
<dbReference type="KEGG" id="hsa:55016"/>
<dbReference type="UCSC" id="uc003iqr.3">
    <molecule id="Q8TCQ1-1"/>
    <property type="organism name" value="human"/>
</dbReference>
<dbReference type="AGR" id="HGNC:26077"/>
<dbReference type="CTD" id="55016"/>
<dbReference type="DisGeNET" id="55016"/>
<dbReference type="GeneCards" id="MARCHF1"/>
<dbReference type="HGNC" id="HGNC:26077">
    <property type="gene designation" value="MARCHF1"/>
</dbReference>
<dbReference type="HPA" id="ENSG00000145416">
    <property type="expression patterns" value="Tissue enhanced (lymphoid tissue, retina)"/>
</dbReference>
<dbReference type="MIM" id="613331">
    <property type="type" value="gene"/>
</dbReference>
<dbReference type="neXtProt" id="NX_Q8TCQ1"/>
<dbReference type="OpenTargets" id="ENSG00000145416"/>
<dbReference type="PharmGKB" id="PA134986392"/>
<dbReference type="VEuPathDB" id="HostDB:ENSG00000145416"/>
<dbReference type="eggNOG" id="KOG1609">
    <property type="taxonomic scope" value="Eukaryota"/>
</dbReference>
<dbReference type="GeneTree" id="ENSGT00940000159346"/>
<dbReference type="HOGENOM" id="CLU_070599_0_1_1"/>
<dbReference type="InParanoid" id="Q8TCQ1"/>
<dbReference type="OMA" id="IRQGNDN"/>
<dbReference type="OrthoDB" id="264354at2759"/>
<dbReference type="PAN-GO" id="Q8TCQ1">
    <property type="GO annotations" value="9 GO annotations based on evolutionary models"/>
</dbReference>
<dbReference type="PhylomeDB" id="Q8TCQ1"/>
<dbReference type="TreeFam" id="TF319557"/>
<dbReference type="PathwayCommons" id="Q8TCQ1"/>
<dbReference type="SIGNOR" id="Q8TCQ1"/>
<dbReference type="UniPathway" id="UPA00143"/>
<dbReference type="BioGRID-ORCS" id="55016">
    <property type="hits" value="3 hits in 920 CRISPR screens"/>
</dbReference>
<dbReference type="ChiTaRS" id="MARCH1">
    <property type="organism name" value="human"/>
</dbReference>
<dbReference type="GenomeRNAi" id="55016"/>
<dbReference type="Pharos" id="Q8TCQ1">
    <property type="development level" value="Tbio"/>
</dbReference>
<dbReference type="PRO" id="PR:Q8TCQ1"/>
<dbReference type="Proteomes" id="UP000005640">
    <property type="component" value="Chromosome 4"/>
</dbReference>
<dbReference type="RNAct" id="Q8TCQ1">
    <property type="molecule type" value="protein"/>
</dbReference>
<dbReference type="Bgee" id="ENSG00000145416">
    <property type="expression patterns" value="Expressed in monocyte and 162 other cell types or tissues"/>
</dbReference>
<dbReference type="ExpressionAtlas" id="Q8TCQ1">
    <property type="expression patterns" value="baseline and differential"/>
</dbReference>
<dbReference type="GO" id="GO:0005737">
    <property type="term" value="C:cytoplasm"/>
    <property type="evidence" value="ECO:0000318"/>
    <property type="project" value="GO_Central"/>
</dbReference>
<dbReference type="GO" id="GO:0031901">
    <property type="term" value="C:early endosome membrane"/>
    <property type="evidence" value="ECO:0000314"/>
    <property type="project" value="UniProtKB"/>
</dbReference>
<dbReference type="GO" id="GO:0005783">
    <property type="term" value="C:endoplasmic reticulum"/>
    <property type="evidence" value="ECO:0000314"/>
    <property type="project" value="HPA"/>
</dbReference>
<dbReference type="GO" id="GO:0005789">
    <property type="term" value="C:endoplasmic reticulum membrane"/>
    <property type="evidence" value="ECO:0000250"/>
    <property type="project" value="UniProtKB"/>
</dbReference>
<dbReference type="GO" id="GO:0005768">
    <property type="term" value="C:endosome"/>
    <property type="evidence" value="ECO:0000314"/>
    <property type="project" value="UniProtKB"/>
</dbReference>
<dbReference type="GO" id="GO:0005794">
    <property type="term" value="C:Golgi apparatus"/>
    <property type="evidence" value="ECO:0000314"/>
    <property type="project" value="HPA"/>
</dbReference>
<dbReference type="GO" id="GO:0043231">
    <property type="term" value="C:intracellular membrane-bounded organelle"/>
    <property type="evidence" value="ECO:0000314"/>
    <property type="project" value="HPA"/>
</dbReference>
<dbReference type="GO" id="GO:0031902">
    <property type="term" value="C:late endosome membrane"/>
    <property type="evidence" value="ECO:0000314"/>
    <property type="project" value="UniProtKB"/>
</dbReference>
<dbReference type="GO" id="GO:0005765">
    <property type="term" value="C:lysosomal membrane"/>
    <property type="evidence" value="ECO:0000250"/>
    <property type="project" value="UniProtKB"/>
</dbReference>
<dbReference type="GO" id="GO:0005764">
    <property type="term" value="C:lysosome"/>
    <property type="evidence" value="ECO:0000314"/>
    <property type="project" value="UniProtKB"/>
</dbReference>
<dbReference type="GO" id="GO:0005886">
    <property type="term" value="C:plasma membrane"/>
    <property type="evidence" value="ECO:0000314"/>
    <property type="project" value="UniProtKB"/>
</dbReference>
<dbReference type="GO" id="GO:0032588">
    <property type="term" value="C:trans-Golgi network membrane"/>
    <property type="evidence" value="ECO:0000250"/>
    <property type="project" value="UniProtKB"/>
</dbReference>
<dbReference type="GO" id="GO:0042287">
    <property type="term" value="F:MHC protein binding"/>
    <property type="evidence" value="ECO:0000314"/>
    <property type="project" value="UniProtKB"/>
</dbReference>
<dbReference type="GO" id="GO:0061630">
    <property type="term" value="F:ubiquitin protein ligase activity"/>
    <property type="evidence" value="ECO:0000314"/>
    <property type="project" value="UniProtKB"/>
</dbReference>
<dbReference type="GO" id="GO:0008270">
    <property type="term" value="F:zinc ion binding"/>
    <property type="evidence" value="ECO:0007669"/>
    <property type="project" value="UniProtKB-KW"/>
</dbReference>
<dbReference type="GO" id="GO:0002495">
    <property type="term" value="P:antigen processing and presentation of peptide antigen via MHC class II"/>
    <property type="evidence" value="ECO:0000314"/>
    <property type="project" value="UniProtKB"/>
</dbReference>
<dbReference type="GO" id="GO:0006955">
    <property type="term" value="P:immune response"/>
    <property type="evidence" value="ECO:0000314"/>
    <property type="project" value="UniProtKB"/>
</dbReference>
<dbReference type="GO" id="GO:0000209">
    <property type="term" value="P:protein polyubiquitination"/>
    <property type="evidence" value="ECO:0000314"/>
    <property type="project" value="UniProtKB"/>
</dbReference>
<dbReference type="CDD" id="cd16806">
    <property type="entry name" value="RING_CH-C4HC3_MARCH1"/>
    <property type="match status" value="1"/>
</dbReference>
<dbReference type="FunFam" id="3.30.40.10:FF:000043">
    <property type="entry name" value="Putative e3 ubiquitin-protein ligase march8"/>
    <property type="match status" value="1"/>
</dbReference>
<dbReference type="Gene3D" id="3.30.40.10">
    <property type="entry name" value="Zinc/RING finger domain, C3HC4 (zinc finger)"/>
    <property type="match status" value="1"/>
</dbReference>
<dbReference type="InterPro" id="IPR001841">
    <property type="entry name" value="Znf_RING"/>
</dbReference>
<dbReference type="InterPro" id="IPR011016">
    <property type="entry name" value="Znf_RING-CH"/>
</dbReference>
<dbReference type="InterPro" id="IPR013083">
    <property type="entry name" value="Znf_RING/FYVE/PHD"/>
</dbReference>
<dbReference type="PANTHER" id="PTHR45981">
    <property type="entry name" value="LD02310P"/>
    <property type="match status" value="1"/>
</dbReference>
<dbReference type="Pfam" id="PF12906">
    <property type="entry name" value="RINGv"/>
    <property type="match status" value="1"/>
</dbReference>
<dbReference type="SMART" id="SM00744">
    <property type="entry name" value="RINGv"/>
    <property type="match status" value="1"/>
</dbReference>
<dbReference type="SUPFAM" id="SSF57850">
    <property type="entry name" value="RING/U-box"/>
    <property type="match status" value="1"/>
</dbReference>
<dbReference type="PROSITE" id="PS51292">
    <property type="entry name" value="ZF_RING_CH"/>
    <property type="match status" value="1"/>
</dbReference>
<keyword id="KW-0025">Alternative splicing</keyword>
<keyword id="KW-1003">Cell membrane</keyword>
<keyword id="KW-0968">Cytoplasmic vesicle</keyword>
<keyword id="KW-0967">Endosome</keyword>
<keyword id="KW-0333">Golgi apparatus</keyword>
<keyword id="KW-0391">Immunity</keyword>
<keyword id="KW-0458">Lysosome</keyword>
<keyword id="KW-0472">Membrane</keyword>
<keyword id="KW-0479">Metal-binding</keyword>
<keyword id="KW-1267">Proteomics identification</keyword>
<keyword id="KW-1185">Reference proteome</keyword>
<keyword id="KW-0808">Transferase</keyword>
<keyword id="KW-0812">Transmembrane</keyword>
<keyword id="KW-1133">Transmembrane helix</keyword>
<keyword id="KW-0832">Ubl conjugation</keyword>
<keyword id="KW-0833">Ubl conjugation pathway</keyword>
<keyword id="KW-0862">Zinc</keyword>
<keyword id="KW-0863">Zinc-finger</keyword>
<reference key="1">
    <citation type="journal article" date="2004" name="Nat. Genet.">
        <title>Complete sequencing and characterization of 21,243 full-length human cDNAs.</title>
        <authorList>
            <person name="Ota T."/>
            <person name="Suzuki Y."/>
            <person name="Nishikawa T."/>
            <person name="Otsuki T."/>
            <person name="Sugiyama T."/>
            <person name="Irie R."/>
            <person name="Wakamatsu A."/>
            <person name="Hayashi K."/>
            <person name="Sato H."/>
            <person name="Nagai K."/>
            <person name="Kimura K."/>
            <person name="Makita H."/>
            <person name="Sekine M."/>
            <person name="Obayashi M."/>
            <person name="Nishi T."/>
            <person name="Shibahara T."/>
            <person name="Tanaka T."/>
            <person name="Ishii S."/>
            <person name="Yamamoto J."/>
            <person name="Saito K."/>
            <person name="Kawai Y."/>
            <person name="Isono Y."/>
            <person name="Nakamura Y."/>
            <person name="Nagahari K."/>
            <person name="Murakami K."/>
            <person name="Yasuda T."/>
            <person name="Iwayanagi T."/>
            <person name="Wagatsuma M."/>
            <person name="Shiratori A."/>
            <person name="Sudo H."/>
            <person name="Hosoiri T."/>
            <person name="Kaku Y."/>
            <person name="Kodaira H."/>
            <person name="Kondo H."/>
            <person name="Sugawara M."/>
            <person name="Takahashi M."/>
            <person name="Kanda K."/>
            <person name="Yokoi T."/>
            <person name="Furuya T."/>
            <person name="Kikkawa E."/>
            <person name="Omura Y."/>
            <person name="Abe K."/>
            <person name="Kamihara K."/>
            <person name="Katsuta N."/>
            <person name="Sato K."/>
            <person name="Tanikawa M."/>
            <person name="Yamazaki M."/>
            <person name="Ninomiya K."/>
            <person name="Ishibashi T."/>
            <person name="Yamashita H."/>
            <person name="Murakawa K."/>
            <person name="Fujimori K."/>
            <person name="Tanai H."/>
            <person name="Kimata M."/>
            <person name="Watanabe M."/>
            <person name="Hiraoka S."/>
            <person name="Chiba Y."/>
            <person name="Ishida S."/>
            <person name="Ono Y."/>
            <person name="Takiguchi S."/>
            <person name="Watanabe S."/>
            <person name="Yosida M."/>
            <person name="Hotuta T."/>
            <person name="Kusano J."/>
            <person name="Kanehori K."/>
            <person name="Takahashi-Fujii A."/>
            <person name="Hara H."/>
            <person name="Tanase T.-O."/>
            <person name="Nomura Y."/>
            <person name="Togiya S."/>
            <person name="Komai F."/>
            <person name="Hara R."/>
            <person name="Takeuchi K."/>
            <person name="Arita M."/>
            <person name="Imose N."/>
            <person name="Musashino K."/>
            <person name="Yuuki H."/>
            <person name="Oshima A."/>
            <person name="Sasaki N."/>
            <person name="Aotsuka S."/>
            <person name="Yoshikawa Y."/>
            <person name="Matsunawa H."/>
            <person name="Ichihara T."/>
            <person name="Shiohata N."/>
            <person name="Sano S."/>
            <person name="Moriya S."/>
            <person name="Momiyama H."/>
            <person name="Satoh N."/>
            <person name="Takami S."/>
            <person name="Terashima Y."/>
            <person name="Suzuki O."/>
            <person name="Nakagawa S."/>
            <person name="Senoh A."/>
            <person name="Mizoguchi H."/>
            <person name="Goto Y."/>
            <person name="Shimizu F."/>
            <person name="Wakebe H."/>
            <person name="Hishigaki H."/>
            <person name="Watanabe T."/>
            <person name="Sugiyama A."/>
            <person name="Takemoto M."/>
            <person name="Kawakami B."/>
            <person name="Yamazaki M."/>
            <person name="Watanabe K."/>
            <person name="Kumagai A."/>
            <person name="Itakura S."/>
            <person name="Fukuzumi Y."/>
            <person name="Fujimori Y."/>
            <person name="Komiyama M."/>
            <person name="Tashiro H."/>
            <person name="Tanigami A."/>
            <person name="Fujiwara T."/>
            <person name="Ono T."/>
            <person name="Yamada K."/>
            <person name="Fujii Y."/>
            <person name="Ozaki K."/>
            <person name="Hirao M."/>
            <person name="Ohmori Y."/>
            <person name="Kawabata A."/>
            <person name="Hikiji T."/>
            <person name="Kobatake N."/>
            <person name="Inagaki H."/>
            <person name="Ikema Y."/>
            <person name="Okamoto S."/>
            <person name="Okitani R."/>
            <person name="Kawakami T."/>
            <person name="Noguchi S."/>
            <person name="Itoh T."/>
            <person name="Shigeta K."/>
            <person name="Senba T."/>
            <person name="Matsumura K."/>
            <person name="Nakajima Y."/>
            <person name="Mizuno T."/>
            <person name="Morinaga M."/>
            <person name="Sasaki M."/>
            <person name="Togashi T."/>
            <person name="Oyama M."/>
            <person name="Hata H."/>
            <person name="Watanabe M."/>
            <person name="Komatsu T."/>
            <person name="Mizushima-Sugano J."/>
            <person name="Satoh T."/>
            <person name="Shirai Y."/>
            <person name="Takahashi Y."/>
            <person name="Nakagawa K."/>
            <person name="Okumura K."/>
            <person name="Nagase T."/>
            <person name="Nomura N."/>
            <person name="Kikuchi H."/>
            <person name="Masuho Y."/>
            <person name="Yamashita R."/>
            <person name="Nakai K."/>
            <person name="Yada T."/>
            <person name="Nakamura Y."/>
            <person name="Ohara O."/>
            <person name="Isogai T."/>
            <person name="Sugano S."/>
        </authorList>
    </citation>
    <scope>NUCLEOTIDE SEQUENCE [LARGE SCALE MRNA] (ISOFORM 2)</scope>
    <source>
        <tissue>Ileal mucosa</tissue>
    </source>
</reference>
<reference key="2">
    <citation type="journal article" date="2007" name="BMC Genomics">
        <title>The full-ORF clone resource of the German cDNA consortium.</title>
        <authorList>
            <person name="Bechtel S."/>
            <person name="Rosenfelder H."/>
            <person name="Duda A."/>
            <person name="Schmidt C.P."/>
            <person name="Ernst U."/>
            <person name="Wellenreuther R."/>
            <person name="Mehrle A."/>
            <person name="Schuster C."/>
            <person name="Bahr A."/>
            <person name="Bloecker H."/>
            <person name="Heubner D."/>
            <person name="Hoerlein A."/>
            <person name="Michel G."/>
            <person name="Wedler H."/>
            <person name="Koehrer K."/>
            <person name="Ottenwaelder B."/>
            <person name="Poustka A."/>
            <person name="Wiemann S."/>
            <person name="Schupp I."/>
        </authorList>
    </citation>
    <scope>NUCLEOTIDE SEQUENCE [LARGE SCALE MRNA] (ISOFORM 1)</scope>
    <source>
        <tissue>Brain</tissue>
    </source>
</reference>
<reference key="3">
    <citation type="submission" date="2005-09" db="EMBL/GenBank/DDBJ databases">
        <authorList>
            <person name="Mural R.J."/>
            <person name="Istrail S."/>
            <person name="Sutton G.G."/>
            <person name="Florea L."/>
            <person name="Halpern A.L."/>
            <person name="Mobarry C.M."/>
            <person name="Lippert R."/>
            <person name="Walenz B."/>
            <person name="Shatkay H."/>
            <person name="Dew I."/>
            <person name="Miller J.R."/>
            <person name="Flanigan M.J."/>
            <person name="Edwards N.J."/>
            <person name="Bolanos R."/>
            <person name="Fasulo D."/>
            <person name="Halldorsson B.V."/>
            <person name="Hannenhalli S."/>
            <person name="Turner R."/>
            <person name="Yooseph S."/>
            <person name="Lu F."/>
            <person name="Nusskern D.R."/>
            <person name="Shue B.C."/>
            <person name="Zheng X.H."/>
            <person name="Zhong F."/>
            <person name="Delcher A.L."/>
            <person name="Huson D.H."/>
            <person name="Kravitz S.A."/>
            <person name="Mouchard L."/>
            <person name="Reinert K."/>
            <person name="Remington K.A."/>
            <person name="Clark A.G."/>
            <person name="Waterman M.S."/>
            <person name="Eichler E.E."/>
            <person name="Adams M.D."/>
            <person name="Hunkapiller M.W."/>
            <person name="Myers E.W."/>
            <person name="Venter J.C."/>
        </authorList>
    </citation>
    <scope>NUCLEOTIDE SEQUENCE [LARGE SCALE GENOMIC DNA]</scope>
</reference>
<reference key="4">
    <citation type="journal article" date="2004" name="J. Virol.">
        <title>Downregulation of major histocompatibility complex class I by human ubiquitin ligases related to viral immune evasion proteins.</title>
        <authorList>
            <person name="Bartee E."/>
            <person name="Mansouri M."/>
            <person name="Hovey Nerenberg B.T."/>
            <person name="Gouveia K."/>
            <person name="Frueh K."/>
        </authorList>
    </citation>
    <scope>FUNCTION</scope>
    <scope>TISSUE SPECIFICITY</scope>
    <scope>SUBCELLULAR LOCATION</scope>
</reference>
<reference key="5">
    <citation type="journal article" date="2007" name="EMBO J.">
        <title>Novel regulation of MHC class II function in B cells.</title>
        <authorList>
            <person name="Matsuki Y."/>
            <person name="Ohmura-Hoshino M."/>
            <person name="Goto E."/>
            <person name="Aoki M."/>
            <person name="Mito-Yoshida M."/>
            <person name="Uematsu M."/>
            <person name="Hasegawa T."/>
            <person name="Koseki H."/>
            <person name="Ohara O."/>
            <person name="Nakayama M."/>
            <person name="Toyooka K."/>
            <person name="Matsuoka K."/>
            <person name="Hotta H."/>
            <person name="Yamamoto A."/>
            <person name="Ishido S."/>
        </authorList>
    </citation>
    <scope>TISSUE SPECIFICITY</scope>
</reference>
<reference key="6">
    <citation type="journal article" date="2008" name="Eur. J. Immunol.">
        <title>Interleukin-10-induced MARCH1 mediates intracellular sequestration of MHC class II in monocytes.</title>
        <authorList>
            <person name="Thibodeau J."/>
            <person name="Bourgeois-Daigneault M.C."/>
            <person name="Huppe G."/>
            <person name="Tremblay J."/>
            <person name="Aumont A."/>
            <person name="Houde M."/>
            <person name="Bartee E."/>
            <person name="Brunet A."/>
            <person name="Gauvreau M.E."/>
            <person name="de Gassart A."/>
            <person name="Gatti E."/>
            <person name="Baril M."/>
            <person name="Cloutier M."/>
            <person name="Bontron S."/>
            <person name="Fruh K."/>
            <person name="Lamarre D."/>
            <person name="Steimle V."/>
        </authorList>
    </citation>
    <scope>FUNCTION AS AN E3 UBIQUITIN LIGASE FOR HLA-DR BETA</scope>
    <scope>INDUCTION BY IL10</scope>
</reference>
<reference key="7">
    <citation type="journal article" date="2008" name="Proc. Natl. Acad. Sci. U.S.A.">
        <title>MHC class II stabilization at the surface of human dendritic cells is the result of maturation-dependent MARCH I down-regulation.</title>
        <authorList>
            <person name="De Gassart A."/>
            <person name="Camosseto V."/>
            <person name="Thibodeau J."/>
            <person name="Ceppi M."/>
            <person name="Catalan N."/>
            <person name="Pierre P."/>
            <person name="Gatti E."/>
        </authorList>
    </citation>
    <scope>FUNCTION AS AN E3 UBIQUITIN LIGASE FOR HLA-DR BETA</scope>
</reference>
<reference key="8">
    <citation type="journal article" date="2009" name="J. Biol. Chem.">
        <title>The HLA-DRalpha chain is modified by polyubiquitination.</title>
        <authorList>
            <person name="Lapaque N."/>
            <person name="Jahnke M."/>
            <person name="Trowsdale J."/>
            <person name="Kelly A.P."/>
        </authorList>
    </citation>
    <scope>FUNCTION AS AN E3 UBIQUITIN LIGASE FOR HLA-DR ALPHA AND BETA</scope>
    <scope>SUBCELLULAR LOCATION</scope>
</reference>
<reference key="9">
    <citation type="journal article" date="2011" name="J. Exp. Med.">
        <title>CD83 increases MHC II and CD86 on dendritic cells by opposing IL-10-driven MARCH1-mediated ubiquitination and degradation.</title>
        <authorList>
            <person name="Tze L.E."/>
            <person name="Horikawa K."/>
            <person name="Domaschenz H."/>
            <person name="Howard D.R."/>
            <person name="Roots C.M."/>
            <person name="Rigby R.J."/>
            <person name="Way D.A."/>
            <person name="Ohmura-Hoshino M."/>
            <person name="Ishido S."/>
            <person name="Andoniou C.E."/>
            <person name="Degli-Esposti M.A."/>
            <person name="Goodnow C.C."/>
        </authorList>
    </citation>
    <scope>FUNCTION</scope>
    <scope>INTERACTION WITH CD83</scope>
</reference>
<reference key="10">
    <citation type="journal article" date="2016" name="Nat. Commun.">
        <title>MARCH1 regulates insulin sensitivity by controlling cell surface insulin receptor levels.</title>
        <authorList>
            <person name="Nagarajan A."/>
            <person name="Petersen M.C."/>
            <person name="Nasiri A.R."/>
            <person name="Butrico G."/>
            <person name="Fung A."/>
            <person name="Ruan H.B."/>
            <person name="Kursawe R."/>
            <person name="Caprio S."/>
            <person name="Thibodeau J."/>
            <person name="Bourgeois-Daigneault M.C."/>
            <person name="Sun L."/>
            <person name="Gao G."/>
            <person name="Bhanot S."/>
            <person name="Jurczak M.J."/>
            <person name="Green M.R."/>
            <person name="Shulman G.I."/>
            <person name="Wajapeyee N."/>
        </authorList>
    </citation>
    <scope>FUNCTION</scope>
    <scope>INDUCTION</scope>
</reference>
<reference key="11">
    <citation type="journal article" date="2018" name="J. Biol. Chem.">
        <title>Ubiquitin-conjugating enzyme E2 D1 (Ube2D1) mediates lysine-independent ubiquitination of the E3 ubiquitin ligase March-I.</title>
        <authorList>
            <person name="Lei L."/>
            <person name="Bandola-Simon J."/>
            <person name="Roche P.A."/>
        </authorList>
    </citation>
    <scope>UBIQUITINATION</scope>
</reference>
<reference key="12">
    <citation type="journal article" date="2022" name="J. Virol.">
        <title>The Immune-Specific E3 Ubiquitin Ligase MARCH1 Is Upregulated during Human Cytomegalovirus Infection to Regulate Iron Levels.</title>
        <authorList>
            <person name="Martin M."/>
            <person name="Sandhu P."/>
            <person name="Kumar R."/>
            <person name="Buchkovich N.J."/>
        </authorList>
    </citation>
    <scope>FUNCTION</scope>
    <scope>FUNCTION (MICROBIAL INFECTION)</scope>
    <scope>INDUCTION BY HUMAN CYTOMEGALOVIRUS INFECTION</scope>
</reference>